<feature type="chain" id="PRO_0000193817" description="AP-3 complex subunit sigma-2">
    <location>
        <begin position="1"/>
        <end position="193"/>
    </location>
</feature>
<feature type="splice variant" id="VSP_053673" description="In isoform 3." evidence="3">
    <original>VFVETLDKCFENVCELDLIFHMDKVHYILQEVV</original>
    <variation>LKKRERKKSQCNTLQTGTLALWEQGPDIRTRRL</variation>
    <location>
        <begin position="92"/>
        <end position="124"/>
    </location>
</feature>
<feature type="splice variant" id="VSP_053674" description="In isoform 3." evidence="3">
    <location>
        <begin position="125"/>
        <end position="193"/>
    </location>
</feature>
<feature type="sequence conflict" description="In Ref. 2; BAG35374." evidence="4" ref="2">
    <original>L</original>
    <variation>I</variation>
    <location>
        <position position="84"/>
    </location>
</feature>
<feature type="sequence conflict" description="In Ref. 3; BAD96418." evidence="4" ref="3">
    <original>G</original>
    <variation>W</variation>
    <location>
        <position position="127"/>
    </location>
</feature>
<reference key="1">
    <citation type="journal article" date="1997" name="EMBO J.">
        <title>AP-3: an adaptor-like protein complex with ubiquitous expression.</title>
        <authorList>
            <person name="Dell'Angelica E.C."/>
            <person name="Ohno H."/>
            <person name="Ooi C.E."/>
            <person name="Rabinovich E."/>
            <person name="Roche K.W."/>
            <person name="Bonifacino J.S."/>
        </authorList>
    </citation>
    <scope>NUCLEOTIDE SEQUENCE [MRNA] (ISOFORM 1)</scope>
    <scope>TISSUE SPECIFICITY</scope>
    <source>
        <tissue>Brain</tissue>
    </source>
</reference>
<reference key="2">
    <citation type="journal article" date="2004" name="Nat. Genet.">
        <title>Complete sequencing and characterization of 21,243 full-length human cDNAs.</title>
        <authorList>
            <person name="Ota T."/>
            <person name="Suzuki Y."/>
            <person name="Nishikawa T."/>
            <person name="Otsuki T."/>
            <person name="Sugiyama T."/>
            <person name="Irie R."/>
            <person name="Wakamatsu A."/>
            <person name="Hayashi K."/>
            <person name="Sato H."/>
            <person name="Nagai K."/>
            <person name="Kimura K."/>
            <person name="Makita H."/>
            <person name="Sekine M."/>
            <person name="Obayashi M."/>
            <person name="Nishi T."/>
            <person name="Shibahara T."/>
            <person name="Tanaka T."/>
            <person name="Ishii S."/>
            <person name="Yamamoto J."/>
            <person name="Saito K."/>
            <person name="Kawai Y."/>
            <person name="Isono Y."/>
            <person name="Nakamura Y."/>
            <person name="Nagahari K."/>
            <person name="Murakami K."/>
            <person name="Yasuda T."/>
            <person name="Iwayanagi T."/>
            <person name="Wagatsuma M."/>
            <person name="Shiratori A."/>
            <person name="Sudo H."/>
            <person name="Hosoiri T."/>
            <person name="Kaku Y."/>
            <person name="Kodaira H."/>
            <person name="Kondo H."/>
            <person name="Sugawara M."/>
            <person name="Takahashi M."/>
            <person name="Kanda K."/>
            <person name="Yokoi T."/>
            <person name="Furuya T."/>
            <person name="Kikkawa E."/>
            <person name="Omura Y."/>
            <person name="Abe K."/>
            <person name="Kamihara K."/>
            <person name="Katsuta N."/>
            <person name="Sato K."/>
            <person name="Tanikawa M."/>
            <person name="Yamazaki M."/>
            <person name="Ninomiya K."/>
            <person name="Ishibashi T."/>
            <person name="Yamashita H."/>
            <person name="Murakawa K."/>
            <person name="Fujimori K."/>
            <person name="Tanai H."/>
            <person name="Kimata M."/>
            <person name="Watanabe M."/>
            <person name="Hiraoka S."/>
            <person name="Chiba Y."/>
            <person name="Ishida S."/>
            <person name="Ono Y."/>
            <person name="Takiguchi S."/>
            <person name="Watanabe S."/>
            <person name="Yosida M."/>
            <person name="Hotuta T."/>
            <person name="Kusano J."/>
            <person name="Kanehori K."/>
            <person name="Takahashi-Fujii A."/>
            <person name="Hara H."/>
            <person name="Tanase T.-O."/>
            <person name="Nomura Y."/>
            <person name="Togiya S."/>
            <person name="Komai F."/>
            <person name="Hara R."/>
            <person name="Takeuchi K."/>
            <person name="Arita M."/>
            <person name="Imose N."/>
            <person name="Musashino K."/>
            <person name="Yuuki H."/>
            <person name="Oshima A."/>
            <person name="Sasaki N."/>
            <person name="Aotsuka S."/>
            <person name="Yoshikawa Y."/>
            <person name="Matsunawa H."/>
            <person name="Ichihara T."/>
            <person name="Shiohata N."/>
            <person name="Sano S."/>
            <person name="Moriya S."/>
            <person name="Momiyama H."/>
            <person name="Satoh N."/>
            <person name="Takami S."/>
            <person name="Terashima Y."/>
            <person name="Suzuki O."/>
            <person name="Nakagawa S."/>
            <person name="Senoh A."/>
            <person name="Mizoguchi H."/>
            <person name="Goto Y."/>
            <person name="Shimizu F."/>
            <person name="Wakebe H."/>
            <person name="Hishigaki H."/>
            <person name="Watanabe T."/>
            <person name="Sugiyama A."/>
            <person name="Takemoto M."/>
            <person name="Kawakami B."/>
            <person name="Yamazaki M."/>
            <person name="Watanabe K."/>
            <person name="Kumagai A."/>
            <person name="Itakura S."/>
            <person name="Fukuzumi Y."/>
            <person name="Fujimori Y."/>
            <person name="Komiyama M."/>
            <person name="Tashiro H."/>
            <person name="Tanigami A."/>
            <person name="Fujiwara T."/>
            <person name="Ono T."/>
            <person name="Yamada K."/>
            <person name="Fujii Y."/>
            <person name="Ozaki K."/>
            <person name="Hirao M."/>
            <person name="Ohmori Y."/>
            <person name="Kawabata A."/>
            <person name="Hikiji T."/>
            <person name="Kobatake N."/>
            <person name="Inagaki H."/>
            <person name="Ikema Y."/>
            <person name="Okamoto S."/>
            <person name="Okitani R."/>
            <person name="Kawakami T."/>
            <person name="Noguchi S."/>
            <person name="Itoh T."/>
            <person name="Shigeta K."/>
            <person name="Senba T."/>
            <person name="Matsumura K."/>
            <person name="Nakajima Y."/>
            <person name="Mizuno T."/>
            <person name="Morinaga M."/>
            <person name="Sasaki M."/>
            <person name="Togashi T."/>
            <person name="Oyama M."/>
            <person name="Hata H."/>
            <person name="Watanabe M."/>
            <person name="Komatsu T."/>
            <person name="Mizushima-Sugano J."/>
            <person name="Satoh T."/>
            <person name="Shirai Y."/>
            <person name="Takahashi Y."/>
            <person name="Nakagawa K."/>
            <person name="Okumura K."/>
            <person name="Nagase T."/>
            <person name="Nomura N."/>
            <person name="Kikuchi H."/>
            <person name="Masuho Y."/>
            <person name="Yamashita R."/>
            <person name="Nakai K."/>
            <person name="Yada T."/>
            <person name="Nakamura Y."/>
            <person name="Ohara O."/>
            <person name="Isogai T."/>
            <person name="Sugano S."/>
        </authorList>
    </citation>
    <scope>NUCLEOTIDE SEQUENCE [LARGE SCALE MRNA] (ISOFORMS 1 AND 3)</scope>
    <source>
        <tissue>Hippocampus</tissue>
    </source>
</reference>
<reference key="3">
    <citation type="submission" date="2005-04" db="EMBL/GenBank/DDBJ databases">
        <authorList>
            <person name="Suzuki Y."/>
            <person name="Sugano S."/>
            <person name="Totoki Y."/>
            <person name="Toyoda A."/>
            <person name="Takeda T."/>
            <person name="Sakaki Y."/>
            <person name="Tanaka A."/>
            <person name="Yokoyama S."/>
        </authorList>
    </citation>
    <scope>NUCLEOTIDE SEQUENCE [LARGE SCALE MRNA]</scope>
    <source>
        <tissue>Brain</tissue>
    </source>
</reference>
<reference key="4">
    <citation type="journal article" date="2006" name="Nature">
        <title>Analysis of the DNA sequence and duplication history of human chromosome 15.</title>
        <authorList>
            <person name="Zody M.C."/>
            <person name="Garber M."/>
            <person name="Sharpe T."/>
            <person name="Young S.K."/>
            <person name="Rowen L."/>
            <person name="O'Neill K."/>
            <person name="Whittaker C.A."/>
            <person name="Kamal M."/>
            <person name="Chang J.L."/>
            <person name="Cuomo C.A."/>
            <person name="Dewar K."/>
            <person name="FitzGerald M.G."/>
            <person name="Kodira C.D."/>
            <person name="Madan A."/>
            <person name="Qin S."/>
            <person name="Yang X."/>
            <person name="Abbasi N."/>
            <person name="Abouelleil A."/>
            <person name="Arachchi H.M."/>
            <person name="Baradarani L."/>
            <person name="Birditt B."/>
            <person name="Bloom S."/>
            <person name="Bloom T."/>
            <person name="Borowsky M.L."/>
            <person name="Burke J."/>
            <person name="Butler J."/>
            <person name="Cook A."/>
            <person name="DeArellano K."/>
            <person name="DeCaprio D."/>
            <person name="Dorris L. III"/>
            <person name="Dors M."/>
            <person name="Eichler E.E."/>
            <person name="Engels R."/>
            <person name="Fahey J."/>
            <person name="Fleetwood P."/>
            <person name="Friedman C."/>
            <person name="Gearin G."/>
            <person name="Hall J.L."/>
            <person name="Hensley G."/>
            <person name="Johnson E."/>
            <person name="Jones C."/>
            <person name="Kamat A."/>
            <person name="Kaur A."/>
            <person name="Locke D.P."/>
            <person name="Madan A."/>
            <person name="Munson G."/>
            <person name="Jaffe D.B."/>
            <person name="Lui A."/>
            <person name="Macdonald P."/>
            <person name="Mauceli E."/>
            <person name="Naylor J.W."/>
            <person name="Nesbitt R."/>
            <person name="Nicol R."/>
            <person name="O'Leary S.B."/>
            <person name="Ratcliffe A."/>
            <person name="Rounsley S."/>
            <person name="She X."/>
            <person name="Sneddon K.M.B."/>
            <person name="Stewart S."/>
            <person name="Sougnez C."/>
            <person name="Stone S.M."/>
            <person name="Topham K."/>
            <person name="Vincent D."/>
            <person name="Wang S."/>
            <person name="Zimmer A.R."/>
            <person name="Birren B.W."/>
            <person name="Hood L."/>
            <person name="Lander E.S."/>
            <person name="Nusbaum C."/>
        </authorList>
    </citation>
    <scope>NUCLEOTIDE SEQUENCE [LARGE SCALE GENOMIC DNA]</scope>
</reference>
<reference key="5">
    <citation type="submission" date="2005-07" db="EMBL/GenBank/DDBJ databases">
        <authorList>
            <person name="Mural R.J."/>
            <person name="Istrail S."/>
            <person name="Sutton G."/>
            <person name="Florea L."/>
            <person name="Halpern A.L."/>
            <person name="Mobarry C.M."/>
            <person name="Lippert R."/>
            <person name="Walenz B."/>
            <person name="Shatkay H."/>
            <person name="Dew I."/>
            <person name="Miller J.R."/>
            <person name="Flanigan M.J."/>
            <person name="Edwards N.J."/>
            <person name="Bolanos R."/>
            <person name="Fasulo D."/>
            <person name="Halldorsson B.V."/>
            <person name="Hannenhalli S."/>
            <person name="Turner R."/>
            <person name="Yooseph S."/>
            <person name="Lu F."/>
            <person name="Nusskern D.R."/>
            <person name="Shue B.C."/>
            <person name="Zheng X.H."/>
            <person name="Zhong F."/>
            <person name="Delcher A.L."/>
            <person name="Huson D.H."/>
            <person name="Kravitz S.A."/>
            <person name="Mouchard L."/>
            <person name="Reinert K."/>
            <person name="Remington K.A."/>
            <person name="Clark A.G."/>
            <person name="Waterman M.S."/>
            <person name="Eichler E.E."/>
            <person name="Adams M.D."/>
            <person name="Hunkapiller M.W."/>
            <person name="Myers E.W."/>
            <person name="Venter J.C."/>
        </authorList>
    </citation>
    <scope>NUCLEOTIDE SEQUENCE [LARGE SCALE GENOMIC DNA]</scope>
</reference>
<reference key="6">
    <citation type="journal article" date="2004" name="Genome Res.">
        <title>The status, quality, and expansion of the NIH full-length cDNA project: the Mammalian Gene Collection (MGC).</title>
        <authorList>
            <consortium name="The MGC Project Team"/>
        </authorList>
    </citation>
    <scope>NUCLEOTIDE SEQUENCE [LARGE SCALE MRNA] (ISOFORM 1)</scope>
    <source>
        <tissue>Colon</tissue>
        <tissue>Skin</tissue>
    </source>
</reference>
<organism>
    <name type="scientific">Homo sapiens</name>
    <name type="common">Human</name>
    <dbReference type="NCBI Taxonomy" id="9606"/>
    <lineage>
        <taxon>Eukaryota</taxon>
        <taxon>Metazoa</taxon>
        <taxon>Chordata</taxon>
        <taxon>Craniata</taxon>
        <taxon>Vertebrata</taxon>
        <taxon>Euteleostomi</taxon>
        <taxon>Mammalia</taxon>
        <taxon>Eutheria</taxon>
        <taxon>Euarchontoglires</taxon>
        <taxon>Primates</taxon>
        <taxon>Haplorrhini</taxon>
        <taxon>Catarrhini</taxon>
        <taxon>Hominidae</taxon>
        <taxon>Homo</taxon>
    </lineage>
</organism>
<keyword id="KW-0025">Alternative splicing</keyword>
<keyword id="KW-0968">Cytoplasmic vesicle</keyword>
<keyword id="KW-0333">Golgi apparatus</keyword>
<keyword id="KW-0472">Membrane</keyword>
<keyword id="KW-0653">Protein transport</keyword>
<keyword id="KW-1267">Proteomics identification</keyword>
<keyword id="KW-1185">Reference proteome</keyword>
<keyword id="KW-0813">Transport</keyword>
<proteinExistence type="evidence at protein level"/>
<accession>P59780</accession>
<accession>B2R677</accession>
<accession>B4DGQ3</accession>
<accession>O09077</accession>
<accession>O09149</accession>
<accession>Q53H83</accession>
<accession>Q99589</accession>
<dbReference type="EMBL" id="X99459">
    <property type="protein sequence ID" value="CAA67824.1"/>
    <property type="molecule type" value="mRNA"/>
</dbReference>
<dbReference type="EMBL" id="AK294712">
    <property type="protein sequence ID" value="BAG57864.1"/>
    <property type="molecule type" value="mRNA"/>
</dbReference>
<dbReference type="EMBL" id="AK312467">
    <property type="protein sequence ID" value="BAG35374.1"/>
    <property type="molecule type" value="mRNA"/>
</dbReference>
<dbReference type="EMBL" id="AK222698">
    <property type="protein sequence ID" value="BAD96418.1"/>
    <property type="molecule type" value="mRNA"/>
</dbReference>
<dbReference type="EMBL" id="AC018988">
    <property type="status" value="NOT_ANNOTATED_CDS"/>
    <property type="molecule type" value="Genomic_DNA"/>
</dbReference>
<dbReference type="EMBL" id="AC027176">
    <property type="status" value="NOT_ANNOTATED_CDS"/>
    <property type="molecule type" value="Genomic_DNA"/>
</dbReference>
<dbReference type="EMBL" id="CH471101">
    <property type="protein sequence ID" value="EAX02074.1"/>
    <property type="molecule type" value="Genomic_DNA"/>
</dbReference>
<dbReference type="EMBL" id="BC002785">
    <property type="protein sequence ID" value="AAH02785.1"/>
    <property type="molecule type" value="mRNA"/>
</dbReference>
<dbReference type="EMBL" id="BC010020">
    <property type="protein sequence ID" value="AAH10020.1"/>
    <property type="molecule type" value="mRNA"/>
</dbReference>
<dbReference type="CCDS" id="CCDS10357.1">
    <molecule id="P59780-1"/>
</dbReference>
<dbReference type="RefSeq" id="NP_005820.1">
    <molecule id="P59780-1"/>
    <property type="nucleotide sequence ID" value="NM_005829.5"/>
</dbReference>
<dbReference type="SMR" id="P59780"/>
<dbReference type="BioGRID" id="115533">
    <property type="interactions" value="26"/>
</dbReference>
<dbReference type="ComplexPortal" id="CPX-5052">
    <property type="entry name" value="Ubiquitous AP-3 Adaptor complex, sigma3b variant"/>
</dbReference>
<dbReference type="ComplexPortal" id="CPX-5053">
    <property type="entry name" value="Neuronal AP-3 Adaptor complex, sigma3b variant"/>
</dbReference>
<dbReference type="CORUM" id="P59780"/>
<dbReference type="FunCoup" id="P59780">
    <property type="interactions" value="1169"/>
</dbReference>
<dbReference type="IntAct" id="P59780">
    <property type="interactions" value="14"/>
</dbReference>
<dbReference type="STRING" id="9606.ENSP00000338777"/>
<dbReference type="iPTMnet" id="P59780"/>
<dbReference type="PhosphoSitePlus" id="P59780"/>
<dbReference type="BioMuta" id="AP3S2"/>
<dbReference type="DMDM" id="33112220"/>
<dbReference type="jPOST" id="P59780"/>
<dbReference type="MassIVE" id="P59780"/>
<dbReference type="PaxDb" id="9606-ENSP00000338777"/>
<dbReference type="PeptideAtlas" id="P59780"/>
<dbReference type="Pumba" id="P59780"/>
<dbReference type="Antibodypedia" id="34959">
    <property type="antibodies" value="92 antibodies from 25 providers"/>
</dbReference>
<dbReference type="DNASU" id="10239"/>
<dbReference type="Ensembl" id="ENST00000336418.9">
    <molecule id="P59780-1"/>
    <property type="protein sequence ID" value="ENSP00000338777.4"/>
    <property type="gene ID" value="ENSG00000157823.17"/>
</dbReference>
<dbReference type="Ensembl" id="ENST00000423566.6">
    <molecule id="P59780-2"/>
    <property type="protein sequence ID" value="ENSP00000394170.2"/>
    <property type="gene ID" value="ENSG00000157823.17"/>
</dbReference>
<dbReference type="Ensembl" id="ENST00000560251.1">
    <molecule id="P59780-2"/>
    <property type="protein sequence ID" value="ENSP00000453288.1"/>
    <property type="gene ID" value="ENSG00000157823.17"/>
</dbReference>
<dbReference type="GeneID" id="10239"/>
<dbReference type="KEGG" id="hsa:10239"/>
<dbReference type="MANE-Select" id="ENST00000336418.9">
    <property type="protein sequence ID" value="ENSP00000338777.4"/>
    <property type="RefSeq nucleotide sequence ID" value="NM_005829.5"/>
    <property type="RefSeq protein sequence ID" value="NP_005820.1"/>
</dbReference>
<dbReference type="UCSC" id="uc002boq.5">
    <molecule id="P59780-1"/>
    <property type="organism name" value="human"/>
</dbReference>
<dbReference type="AGR" id="HGNC:571"/>
<dbReference type="CTD" id="10239"/>
<dbReference type="DisGeNET" id="10239"/>
<dbReference type="GeneCards" id="AP3S2"/>
<dbReference type="HGNC" id="HGNC:571">
    <property type="gene designation" value="AP3S2"/>
</dbReference>
<dbReference type="HPA" id="ENSG00000157823">
    <property type="expression patterns" value="Low tissue specificity"/>
</dbReference>
<dbReference type="MIM" id="602416">
    <property type="type" value="gene"/>
</dbReference>
<dbReference type="neXtProt" id="NX_P59780"/>
<dbReference type="OpenTargets" id="ENSG00000157823"/>
<dbReference type="PharmGKB" id="PA24863"/>
<dbReference type="VEuPathDB" id="HostDB:ENSG00000157823"/>
<dbReference type="eggNOG" id="KOG0936">
    <property type="taxonomic scope" value="Eukaryota"/>
</dbReference>
<dbReference type="GeneTree" id="ENSGT00970000193421"/>
<dbReference type="InParanoid" id="P59780"/>
<dbReference type="OrthoDB" id="10261046at2759"/>
<dbReference type="PAN-GO" id="P59780">
    <property type="GO annotations" value="2 GO annotations based on evolutionary models"/>
</dbReference>
<dbReference type="PhylomeDB" id="P59780"/>
<dbReference type="TreeFam" id="TF300189"/>
<dbReference type="PathwayCommons" id="P59780"/>
<dbReference type="SignaLink" id="P59780"/>
<dbReference type="SIGNOR" id="P59780"/>
<dbReference type="BioGRID-ORCS" id="10239">
    <property type="hits" value="20 hits in 1154 CRISPR screens"/>
</dbReference>
<dbReference type="CD-CODE" id="FB4E32DD">
    <property type="entry name" value="Presynaptic clusters and postsynaptic densities"/>
</dbReference>
<dbReference type="GeneWiki" id="AP3S2"/>
<dbReference type="GenomeRNAi" id="10239"/>
<dbReference type="Pharos" id="P59780">
    <property type="development level" value="Tdark"/>
</dbReference>
<dbReference type="Proteomes" id="UP000005640">
    <property type="component" value="Chromosome 15"/>
</dbReference>
<dbReference type="RNAct" id="P59780">
    <property type="molecule type" value="protein"/>
</dbReference>
<dbReference type="Bgee" id="ENSG00000157823">
    <property type="expression patterns" value="Expressed in rectum and 195 other cell types or tissues"/>
</dbReference>
<dbReference type="ExpressionAtlas" id="P59780">
    <property type="expression patterns" value="baseline and differential"/>
</dbReference>
<dbReference type="GO" id="GO:0030123">
    <property type="term" value="C:AP-3 adaptor complex"/>
    <property type="evidence" value="ECO:0000314"/>
    <property type="project" value="FlyBase"/>
</dbReference>
<dbReference type="GO" id="GO:1904115">
    <property type="term" value="C:axon cytoplasm"/>
    <property type="evidence" value="ECO:0007669"/>
    <property type="project" value="GOC"/>
</dbReference>
<dbReference type="GO" id="GO:0030659">
    <property type="term" value="C:cytoplasmic vesicle membrane"/>
    <property type="evidence" value="ECO:0007669"/>
    <property type="project" value="UniProtKB-SubCell"/>
</dbReference>
<dbReference type="GO" id="GO:0005769">
    <property type="term" value="C:early endosome"/>
    <property type="evidence" value="ECO:0000303"/>
    <property type="project" value="ComplexPortal"/>
</dbReference>
<dbReference type="GO" id="GO:0005794">
    <property type="term" value="C:Golgi apparatus"/>
    <property type="evidence" value="ECO:0007669"/>
    <property type="project" value="UniProtKB-SubCell"/>
</dbReference>
<dbReference type="GO" id="GO:0043231">
    <property type="term" value="C:intracellular membrane-bounded organelle"/>
    <property type="evidence" value="ECO:0000314"/>
    <property type="project" value="HPA"/>
</dbReference>
<dbReference type="GO" id="GO:0008021">
    <property type="term" value="C:synaptic vesicle"/>
    <property type="evidence" value="ECO:0007669"/>
    <property type="project" value="Ensembl"/>
</dbReference>
<dbReference type="GO" id="GO:0008089">
    <property type="term" value="P:anterograde axonal transport"/>
    <property type="evidence" value="ECO:0000250"/>
    <property type="project" value="UniProtKB"/>
</dbReference>
<dbReference type="GO" id="GO:0048490">
    <property type="term" value="P:anterograde synaptic vesicle transport"/>
    <property type="evidence" value="ECO:0000250"/>
    <property type="project" value="UniProtKB"/>
</dbReference>
<dbReference type="GO" id="GO:0035654">
    <property type="term" value="P:clathrin-coated vesicle cargo loading, AP-3-mediated"/>
    <property type="evidence" value="ECO:0000303"/>
    <property type="project" value="ComplexPortal"/>
</dbReference>
<dbReference type="GO" id="GO:0006896">
    <property type="term" value="P:Golgi to vacuole transport"/>
    <property type="evidence" value="ECO:0007669"/>
    <property type="project" value="InterPro"/>
</dbReference>
<dbReference type="GO" id="GO:0006886">
    <property type="term" value="P:intracellular protein transport"/>
    <property type="evidence" value="ECO:0007669"/>
    <property type="project" value="InterPro"/>
</dbReference>
<dbReference type="GO" id="GO:0046907">
    <property type="term" value="P:intracellular transport"/>
    <property type="evidence" value="ECO:0000303"/>
    <property type="project" value="ComplexPortal"/>
</dbReference>
<dbReference type="GO" id="GO:1903232">
    <property type="term" value="P:melanosome assembly"/>
    <property type="evidence" value="ECO:0000303"/>
    <property type="project" value="ComplexPortal"/>
</dbReference>
<dbReference type="GO" id="GO:0060155">
    <property type="term" value="P:platelet dense granule organization"/>
    <property type="evidence" value="ECO:0000303"/>
    <property type="project" value="ComplexPortal"/>
</dbReference>
<dbReference type="GO" id="GO:0016183">
    <property type="term" value="P:synaptic vesicle coating"/>
    <property type="evidence" value="ECO:0000303"/>
    <property type="project" value="ComplexPortal"/>
</dbReference>
<dbReference type="GO" id="GO:0036465">
    <property type="term" value="P:synaptic vesicle recycling"/>
    <property type="evidence" value="ECO:0000303"/>
    <property type="project" value="ComplexPortal"/>
</dbReference>
<dbReference type="GO" id="GO:0016192">
    <property type="term" value="P:vesicle-mediated transport"/>
    <property type="evidence" value="ECO:0000318"/>
    <property type="project" value="GO_Central"/>
</dbReference>
<dbReference type="CDD" id="cd14834">
    <property type="entry name" value="AP3_sigma"/>
    <property type="match status" value="1"/>
</dbReference>
<dbReference type="FunFam" id="3.30.450.60:FF:000001">
    <property type="entry name" value="AP complex subunit sigma"/>
    <property type="match status" value="1"/>
</dbReference>
<dbReference type="Gene3D" id="3.30.450.60">
    <property type="match status" value="1"/>
</dbReference>
<dbReference type="InterPro" id="IPR016635">
    <property type="entry name" value="AP_complex_ssu"/>
</dbReference>
<dbReference type="InterPro" id="IPR022775">
    <property type="entry name" value="AP_mu_sigma_su"/>
</dbReference>
<dbReference type="InterPro" id="IPR027155">
    <property type="entry name" value="APS3"/>
</dbReference>
<dbReference type="InterPro" id="IPR000804">
    <property type="entry name" value="Clathrin_sm-chain_CS"/>
</dbReference>
<dbReference type="InterPro" id="IPR011012">
    <property type="entry name" value="Longin-like_dom_sf"/>
</dbReference>
<dbReference type="PANTHER" id="PTHR11753">
    <property type="entry name" value="ADAPTOR COMPLEXES SMALL SUBUNIT FAMILY"/>
    <property type="match status" value="1"/>
</dbReference>
<dbReference type="Pfam" id="PF01217">
    <property type="entry name" value="Clat_adaptor_s"/>
    <property type="match status" value="1"/>
</dbReference>
<dbReference type="SUPFAM" id="SSF64356">
    <property type="entry name" value="SNARE-like"/>
    <property type="match status" value="1"/>
</dbReference>
<dbReference type="PROSITE" id="PS00989">
    <property type="entry name" value="CLAT_ADAPTOR_S"/>
    <property type="match status" value="1"/>
</dbReference>
<sequence>MIQAILVFNNHGKPRLVRFYQRFPEEIQQQIVRETFHLVLKRDDNICNFLEGGSLIGGSDYKLIYRHYATLYFVFCVDSSESELGILDLIQVFVETLDKCFENVCELDLIFHMDKVHYILQEVVMGGMVLETNMNEIVAQIEAQNRLEKSEGGLSAAPARAVSAVKNINLPEIPRNINIGDLNIKVPNLSQFV</sequence>
<protein>
    <recommendedName>
        <fullName>AP-3 complex subunit sigma-2</fullName>
    </recommendedName>
    <alternativeName>
        <fullName>AP-3 complex subunit sigma-3B</fullName>
    </alternativeName>
    <alternativeName>
        <fullName>Adaptor-related protein complex 3 subunit sigma-2</fullName>
    </alternativeName>
    <alternativeName>
        <fullName>Sigma-3B-adaptin</fullName>
        <shortName>Sigma3B-adaptin</shortName>
    </alternativeName>
    <alternativeName>
        <fullName>Sigma-adaptin 3b</fullName>
    </alternativeName>
</protein>
<name>AP3S2_HUMAN</name>
<gene>
    <name type="primary">AP3S2</name>
</gene>
<evidence type="ECO:0000250" key="1"/>
<evidence type="ECO:0000269" key="2">
    <source>
    </source>
</evidence>
<evidence type="ECO:0000303" key="3">
    <source>
    </source>
</evidence>
<evidence type="ECO:0000305" key="4"/>
<comment type="function">
    <text>Part of the AP-3 complex, an adaptor-related complex which is not clathrin-associated. The complex is associated with the Golgi region as well as more peripheral structures. It facilitates the budding of vesicles from the Golgi membrane and may be directly involved in trafficking to lysosomes. In concert with the BLOC-1 complex, AP-3 is required to target cargos into vesicles assembled at cell bodies for delivery into neurites and nerve terminals.</text>
</comment>
<comment type="subunit">
    <text evidence="1">Adaptor protein complex 3 (AP-3) is a heterotetramer composed of two large adaptins (delta-type subunit AP3D1 and beta-type subunit AP3B1 or AP3B2), a medium adaptin (mu-type subunit AP3M1 or AP3M2) and a small adaptin (sigma-type subunit APS1 or AP3S2). Interacts with AGAP1. AP-3 associates with the BLOC-1 complex (By similarity).</text>
</comment>
<comment type="subcellular location">
    <subcellularLocation>
        <location>Golgi apparatus</location>
    </subcellularLocation>
    <subcellularLocation>
        <location evidence="1">Cytoplasmic vesicle membrane</location>
        <topology evidence="1">Peripheral membrane protein</topology>
        <orientation evidence="1">Cytoplasmic side</orientation>
    </subcellularLocation>
    <text evidence="1">Component of the coat surrounding the cytoplasmic face of coated vesicles located at the Golgi complex.</text>
</comment>
<comment type="alternative products">
    <event type="alternative splicing"/>
    <isoform>
        <id>P59780-1</id>
        <name>1</name>
        <sequence type="displayed"/>
    </isoform>
    <isoform>
        <id>Q7Z6K5-2</id>
        <name>C15orf38-AP3S2</name>
        <sequence type="external"/>
    </isoform>
    <isoform>
        <id>P59780-2</id>
        <name>3</name>
        <sequence type="described" ref="VSP_053673 VSP_053674"/>
    </isoform>
</comment>
<comment type="tissue specificity">
    <text evidence="2">Present in all adult tissues examined.</text>
</comment>
<comment type="similarity">
    <text evidence="4">Belongs to the adaptor complexes small subunit family.</text>
</comment>